<gene>
    <name type="ordered locus">STY3326</name>
    <name type="ordered locus">t3074</name>
</gene>
<protein>
    <recommendedName>
        <fullName evidence="1">UPF0114 protein YqhA</fullName>
    </recommendedName>
</protein>
<dbReference type="EMBL" id="AL513382">
    <property type="protein sequence ID" value="CAD02985.1"/>
    <property type="molecule type" value="Genomic_DNA"/>
</dbReference>
<dbReference type="EMBL" id="AE014613">
    <property type="protein sequence ID" value="AAO70619.1"/>
    <property type="molecule type" value="Genomic_DNA"/>
</dbReference>
<dbReference type="RefSeq" id="NP_457547.1">
    <property type="nucleotide sequence ID" value="NC_003198.1"/>
</dbReference>
<dbReference type="RefSeq" id="WP_000439337.1">
    <property type="nucleotide sequence ID" value="NZ_WSUR01000003.1"/>
</dbReference>
<dbReference type="KEGG" id="stt:t3074"/>
<dbReference type="KEGG" id="sty:STY3326"/>
<dbReference type="PATRIC" id="fig|220341.7.peg.3386"/>
<dbReference type="eggNOG" id="COG2862">
    <property type="taxonomic scope" value="Bacteria"/>
</dbReference>
<dbReference type="HOGENOM" id="CLU_097887_1_1_6"/>
<dbReference type="OMA" id="HTIMWQV"/>
<dbReference type="OrthoDB" id="9783569at2"/>
<dbReference type="Proteomes" id="UP000000541">
    <property type="component" value="Chromosome"/>
</dbReference>
<dbReference type="Proteomes" id="UP000002670">
    <property type="component" value="Chromosome"/>
</dbReference>
<dbReference type="GO" id="GO:0005886">
    <property type="term" value="C:plasma membrane"/>
    <property type="evidence" value="ECO:0007669"/>
    <property type="project" value="UniProtKB-SubCell"/>
</dbReference>
<dbReference type="HAMAP" id="MF_00143">
    <property type="entry name" value="UPF0114"/>
    <property type="match status" value="1"/>
</dbReference>
<dbReference type="InterPro" id="IPR005134">
    <property type="entry name" value="UPF0114"/>
</dbReference>
<dbReference type="InterPro" id="IPR020761">
    <property type="entry name" value="UPF0114_bac"/>
</dbReference>
<dbReference type="NCBIfam" id="TIGR00645">
    <property type="entry name" value="HI0507"/>
    <property type="match status" value="1"/>
</dbReference>
<dbReference type="PANTHER" id="PTHR38596">
    <property type="entry name" value="UPF0114 PROTEIN YQHA"/>
    <property type="match status" value="1"/>
</dbReference>
<dbReference type="PANTHER" id="PTHR38596:SF1">
    <property type="entry name" value="UPF0114 PROTEIN YQHA"/>
    <property type="match status" value="1"/>
</dbReference>
<dbReference type="Pfam" id="PF03350">
    <property type="entry name" value="UPF0114"/>
    <property type="match status" value="1"/>
</dbReference>
<organism>
    <name type="scientific">Salmonella typhi</name>
    <dbReference type="NCBI Taxonomy" id="90370"/>
    <lineage>
        <taxon>Bacteria</taxon>
        <taxon>Pseudomonadati</taxon>
        <taxon>Pseudomonadota</taxon>
        <taxon>Gammaproteobacteria</taxon>
        <taxon>Enterobacterales</taxon>
        <taxon>Enterobacteriaceae</taxon>
        <taxon>Salmonella</taxon>
    </lineage>
</organism>
<proteinExistence type="inferred from homology"/>
<keyword id="KW-1003">Cell membrane</keyword>
<keyword id="KW-0472">Membrane</keyword>
<keyword id="KW-0812">Transmembrane</keyword>
<keyword id="KW-1133">Transmembrane helix</keyword>
<sequence>MERFLENVMYASRWLLAPVYFGLSLALIALALKFFQEILHVLPNVFALAEADLILVLLSLVDMTLVGGLLVMVMFSGYENFVSQLDISAGKEKLNWLGKMDATSLKNKVAASIVAISSIHLLRVFMDARNVPDNKLMWYVIIHLTFVLSAFVMGYLDRLTRHNH</sequence>
<comment type="subcellular location">
    <subcellularLocation>
        <location evidence="1">Cell membrane</location>
        <topology evidence="1">Multi-pass membrane protein</topology>
    </subcellularLocation>
</comment>
<comment type="similarity">
    <text evidence="1">Belongs to the UPF0114 family.</text>
</comment>
<accession>Q8Z3Q8</accession>
<reference key="1">
    <citation type="journal article" date="2001" name="Nature">
        <title>Complete genome sequence of a multiple drug resistant Salmonella enterica serovar Typhi CT18.</title>
        <authorList>
            <person name="Parkhill J."/>
            <person name="Dougan G."/>
            <person name="James K.D."/>
            <person name="Thomson N.R."/>
            <person name="Pickard D."/>
            <person name="Wain J."/>
            <person name="Churcher C.M."/>
            <person name="Mungall K.L."/>
            <person name="Bentley S.D."/>
            <person name="Holden M.T.G."/>
            <person name="Sebaihia M."/>
            <person name="Baker S."/>
            <person name="Basham D."/>
            <person name="Brooks K."/>
            <person name="Chillingworth T."/>
            <person name="Connerton P."/>
            <person name="Cronin A."/>
            <person name="Davis P."/>
            <person name="Davies R.M."/>
            <person name="Dowd L."/>
            <person name="White N."/>
            <person name="Farrar J."/>
            <person name="Feltwell T."/>
            <person name="Hamlin N."/>
            <person name="Haque A."/>
            <person name="Hien T.T."/>
            <person name="Holroyd S."/>
            <person name="Jagels K."/>
            <person name="Krogh A."/>
            <person name="Larsen T.S."/>
            <person name="Leather S."/>
            <person name="Moule S."/>
            <person name="O'Gaora P."/>
            <person name="Parry C."/>
            <person name="Quail M.A."/>
            <person name="Rutherford K.M."/>
            <person name="Simmonds M."/>
            <person name="Skelton J."/>
            <person name="Stevens K."/>
            <person name="Whitehead S."/>
            <person name="Barrell B.G."/>
        </authorList>
    </citation>
    <scope>NUCLEOTIDE SEQUENCE [LARGE SCALE GENOMIC DNA]</scope>
    <source>
        <strain>CT18</strain>
    </source>
</reference>
<reference key="2">
    <citation type="journal article" date="2003" name="J. Bacteriol.">
        <title>Comparative genomics of Salmonella enterica serovar Typhi strains Ty2 and CT18.</title>
        <authorList>
            <person name="Deng W."/>
            <person name="Liou S.-R."/>
            <person name="Plunkett G. III"/>
            <person name="Mayhew G.F."/>
            <person name="Rose D.J."/>
            <person name="Burland V."/>
            <person name="Kodoyianni V."/>
            <person name="Schwartz D.C."/>
            <person name="Blattner F.R."/>
        </authorList>
    </citation>
    <scope>NUCLEOTIDE SEQUENCE [LARGE SCALE GENOMIC DNA]</scope>
    <source>
        <strain>ATCC 700931 / Ty2</strain>
    </source>
</reference>
<evidence type="ECO:0000255" key="1">
    <source>
        <dbReference type="HAMAP-Rule" id="MF_00143"/>
    </source>
</evidence>
<name>YQHA_SALTI</name>
<feature type="chain" id="PRO_0000214377" description="UPF0114 protein YqhA">
    <location>
        <begin position="1"/>
        <end position="164"/>
    </location>
</feature>
<feature type="transmembrane region" description="Helical" evidence="1">
    <location>
        <begin position="10"/>
        <end position="32"/>
    </location>
</feature>
<feature type="transmembrane region" description="Helical" evidence="1">
    <location>
        <begin position="53"/>
        <end position="75"/>
    </location>
</feature>
<feature type="transmembrane region" description="Helical" evidence="1">
    <location>
        <begin position="136"/>
        <end position="155"/>
    </location>
</feature>